<reference evidence="6" key="1">
    <citation type="journal article" date="2010" name="Peptides">
        <title>CAPA-peptides of praying mantids (Mantodea).</title>
        <authorList>
            <person name="Koehler R."/>
            <person name="Predel R."/>
        </authorList>
    </citation>
    <scope>PROTEIN SEQUENCE</scope>
    <scope>MASS SPECTROMETRY</scope>
    <scope>AMIDATION AT VAL-11</scope>
    <source>
        <tissue evidence="4">Abdominal perisympathetic organs</tissue>
    </source>
</reference>
<protein>
    <recommendedName>
        <fullName evidence="5">Periviscerokinin-2</fullName>
    </recommendedName>
</protein>
<proteinExistence type="evidence at protein level"/>
<name>PVK2_CHRSK</name>
<dbReference type="GO" id="GO:0005576">
    <property type="term" value="C:extracellular region"/>
    <property type="evidence" value="ECO:0007669"/>
    <property type="project" value="UniProtKB-SubCell"/>
</dbReference>
<dbReference type="GO" id="GO:0007218">
    <property type="term" value="P:neuropeptide signaling pathway"/>
    <property type="evidence" value="ECO:0007669"/>
    <property type="project" value="UniProtKB-KW"/>
</dbReference>
<dbReference type="InterPro" id="IPR013231">
    <property type="entry name" value="Periviscerokinin"/>
</dbReference>
<dbReference type="Pfam" id="PF08259">
    <property type="entry name" value="Periviscerokin"/>
    <property type="match status" value="1"/>
</dbReference>
<comment type="function">
    <text evidence="1">Mediates visceral muscle contractile activity (myotropic activity).</text>
</comment>
<comment type="subcellular location">
    <subcellularLocation>
        <location evidence="2">Secreted</location>
    </subcellularLocation>
</comment>
<comment type="mass spectrometry" mass="1102.6" method="MALDI" evidence="4"/>
<comment type="similarity">
    <text evidence="3">Belongs to the periviscerokinin family.</text>
</comment>
<organism>
    <name type="scientific">Chroicoptera sp. (strain Kasungu)</name>
    <name type="common">Praying mantis</name>
    <dbReference type="NCBI Taxonomy" id="765341"/>
    <lineage>
        <taxon>Eukaryota</taxon>
        <taxon>Metazoa</taxon>
        <taxon>Ecdysozoa</taxon>
        <taxon>Arthropoda</taxon>
        <taxon>Hexapoda</taxon>
        <taxon>Insecta</taxon>
        <taxon>Pterygota</taxon>
        <taxon>Neoptera</taxon>
        <taxon>Polyneoptera</taxon>
        <taxon>Dictyoptera</taxon>
        <taxon>Mantodea</taxon>
        <taxon>Eumantodea</taxon>
        <taxon>Chroicopteroidea</taxon>
        <taxon>Chroicopteridae</taxon>
        <taxon>Chroicopterinae</taxon>
        <taxon>Chroicoptera</taxon>
    </lineage>
</organism>
<sequence length="11" mass="1103">GASGLISFPRV</sequence>
<accession>P86647</accession>
<feature type="peptide" id="PRO_0000395581" description="Periviscerokinin-2" evidence="4">
    <location>
        <begin position="1"/>
        <end position="11"/>
    </location>
</feature>
<feature type="modified residue" description="Valine amide" evidence="4">
    <location>
        <position position="11"/>
    </location>
</feature>
<feature type="unsure residue" description="L or I" evidence="4">
    <location>
        <position position="5"/>
    </location>
</feature>
<feature type="unsure residue" description="I or L" evidence="4">
    <location>
        <position position="6"/>
    </location>
</feature>
<keyword id="KW-0027">Amidation</keyword>
<keyword id="KW-0903">Direct protein sequencing</keyword>
<keyword id="KW-0527">Neuropeptide</keyword>
<keyword id="KW-0964">Secreted</keyword>
<evidence type="ECO:0000250" key="1">
    <source>
        <dbReference type="UniProtKB" id="P83923"/>
    </source>
</evidence>
<evidence type="ECO:0000250" key="2">
    <source>
        <dbReference type="UniProtKB" id="P84375"/>
    </source>
</evidence>
<evidence type="ECO:0000255" key="3"/>
<evidence type="ECO:0000269" key="4">
    <source>
    </source>
</evidence>
<evidence type="ECO:0000303" key="5">
    <source>
    </source>
</evidence>
<evidence type="ECO:0000305" key="6"/>